<keyword id="KW-1185">Reference proteome</keyword>
<keyword id="KW-0687">Ribonucleoprotein</keyword>
<keyword id="KW-0689">Ribosomal protein</keyword>
<keyword id="KW-0694">RNA-binding</keyword>
<keyword id="KW-0699">rRNA-binding</keyword>
<proteinExistence type="inferred from homology"/>
<reference key="1">
    <citation type="submission" date="2006-10" db="EMBL/GenBank/DDBJ databases">
        <title>Complete sequence of chromosome of Pelobacter propionicus DSM 2379.</title>
        <authorList>
            <consortium name="US DOE Joint Genome Institute"/>
            <person name="Copeland A."/>
            <person name="Lucas S."/>
            <person name="Lapidus A."/>
            <person name="Barry K."/>
            <person name="Detter J.C."/>
            <person name="Glavina del Rio T."/>
            <person name="Hammon N."/>
            <person name="Israni S."/>
            <person name="Dalin E."/>
            <person name="Tice H."/>
            <person name="Pitluck S."/>
            <person name="Saunders E."/>
            <person name="Brettin T."/>
            <person name="Bruce D."/>
            <person name="Han C."/>
            <person name="Tapia R."/>
            <person name="Schmutz J."/>
            <person name="Larimer F."/>
            <person name="Land M."/>
            <person name="Hauser L."/>
            <person name="Kyrpides N."/>
            <person name="Kim E."/>
            <person name="Lovley D."/>
            <person name="Richardson P."/>
        </authorList>
    </citation>
    <scope>NUCLEOTIDE SEQUENCE [LARGE SCALE GENOMIC DNA]</scope>
    <source>
        <strain>DSM 2379 / NBRC 103807 / OttBd1</strain>
    </source>
</reference>
<sequence>MPSIAVYNMNRQQVGELQLADDVFNADVKEHLMHLALRIQLANRRAGTVKTKTRSEVAGSGKKPFKQKGTGNARQGCVRAPQYPGGGVAFGPQPKEYHLSMNKKARKSAICSALSLQCKNNRITVMDKLDFSSISTKAFVDFMKRFEIERSLIITDDFSNNLQLSCRNVPHVKLLKHDALNIHDILKYKNIIFTQGAVQSVEGVLNK</sequence>
<comment type="function">
    <text evidence="1">One of the primary rRNA binding proteins, this protein initially binds near the 5'-end of the 23S rRNA. It is important during the early stages of 50S assembly. It makes multiple contacts with different domains of the 23S rRNA in the assembled 50S subunit and ribosome.</text>
</comment>
<comment type="function">
    <text evidence="1">Forms part of the polypeptide exit tunnel.</text>
</comment>
<comment type="subunit">
    <text evidence="1">Part of the 50S ribosomal subunit.</text>
</comment>
<comment type="similarity">
    <text evidence="1">Belongs to the universal ribosomal protein uL4 family.</text>
</comment>
<feature type="chain" id="PRO_1000052461" description="Large ribosomal subunit protein uL4">
    <location>
        <begin position="1"/>
        <end position="207"/>
    </location>
</feature>
<feature type="region of interest" description="Disordered" evidence="2">
    <location>
        <begin position="50"/>
        <end position="75"/>
    </location>
</feature>
<organism>
    <name type="scientific">Pelobacter propionicus (strain DSM 2379 / NBRC 103807 / OttBd1)</name>
    <dbReference type="NCBI Taxonomy" id="338966"/>
    <lineage>
        <taxon>Bacteria</taxon>
        <taxon>Pseudomonadati</taxon>
        <taxon>Thermodesulfobacteriota</taxon>
        <taxon>Desulfuromonadia</taxon>
        <taxon>Desulfuromonadales</taxon>
        <taxon>Desulfuromonadaceae</taxon>
        <taxon>Pelobacter</taxon>
    </lineage>
</organism>
<dbReference type="EMBL" id="CP000482">
    <property type="protein sequence ID" value="ABK98312.1"/>
    <property type="molecule type" value="Genomic_DNA"/>
</dbReference>
<dbReference type="RefSeq" id="WP_011734624.1">
    <property type="nucleotide sequence ID" value="NC_008609.1"/>
</dbReference>
<dbReference type="SMR" id="A1ALU2"/>
<dbReference type="STRING" id="338966.Ppro_0681"/>
<dbReference type="KEGG" id="ppd:Ppro_0681"/>
<dbReference type="eggNOG" id="COG0088">
    <property type="taxonomic scope" value="Bacteria"/>
</dbReference>
<dbReference type="HOGENOM" id="CLU_041575_5_2_7"/>
<dbReference type="OrthoDB" id="9803201at2"/>
<dbReference type="Proteomes" id="UP000006732">
    <property type="component" value="Chromosome"/>
</dbReference>
<dbReference type="GO" id="GO:1990904">
    <property type="term" value="C:ribonucleoprotein complex"/>
    <property type="evidence" value="ECO:0007669"/>
    <property type="project" value="UniProtKB-KW"/>
</dbReference>
<dbReference type="GO" id="GO:0005840">
    <property type="term" value="C:ribosome"/>
    <property type="evidence" value="ECO:0007669"/>
    <property type="project" value="UniProtKB-KW"/>
</dbReference>
<dbReference type="GO" id="GO:0019843">
    <property type="term" value="F:rRNA binding"/>
    <property type="evidence" value="ECO:0007669"/>
    <property type="project" value="UniProtKB-UniRule"/>
</dbReference>
<dbReference type="GO" id="GO:0003735">
    <property type="term" value="F:structural constituent of ribosome"/>
    <property type="evidence" value="ECO:0007669"/>
    <property type="project" value="InterPro"/>
</dbReference>
<dbReference type="GO" id="GO:0006412">
    <property type="term" value="P:translation"/>
    <property type="evidence" value="ECO:0007669"/>
    <property type="project" value="UniProtKB-UniRule"/>
</dbReference>
<dbReference type="Gene3D" id="3.40.1370.10">
    <property type="match status" value="1"/>
</dbReference>
<dbReference type="HAMAP" id="MF_01328_B">
    <property type="entry name" value="Ribosomal_uL4_B"/>
    <property type="match status" value="1"/>
</dbReference>
<dbReference type="InterPro" id="IPR002136">
    <property type="entry name" value="Ribosomal_uL4"/>
</dbReference>
<dbReference type="InterPro" id="IPR013005">
    <property type="entry name" value="Ribosomal_uL4-like"/>
</dbReference>
<dbReference type="InterPro" id="IPR023574">
    <property type="entry name" value="Ribosomal_uL4_dom_sf"/>
</dbReference>
<dbReference type="NCBIfam" id="TIGR03953">
    <property type="entry name" value="rplD_bact"/>
    <property type="match status" value="1"/>
</dbReference>
<dbReference type="PANTHER" id="PTHR10746">
    <property type="entry name" value="50S RIBOSOMAL PROTEIN L4"/>
    <property type="match status" value="1"/>
</dbReference>
<dbReference type="PANTHER" id="PTHR10746:SF6">
    <property type="entry name" value="LARGE RIBOSOMAL SUBUNIT PROTEIN UL4M"/>
    <property type="match status" value="1"/>
</dbReference>
<dbReference type="Pfam" id="PF00573">
    <property type="entry name" value="Ribosomal_L4"/>
    <property type="match status" value="1"/>
</dbReference>
<dbReference type="SUPFAM" id="SSF52166">
    <property type="entry name" value="Ribosomal protein L4"/>
    <property type="match status" value="1"/>
</dbReference>
<evidence type="ECO:0000255" key="1">
    <source>
        <dbReference type="HAMAP-Rule" id="MF_01328"/>
    </source>
</evidence>
<evidence type="ECO:0000256" key="2">
    <source>
        <dbReference type="SAM" id="MobiDB-lite"/>
    </source>
</evidence>
<evidence type="ECO:0000305" key="3"/>
<gene>
    <name evidence="1" type="primary">rplD</name>
    <name type="ordered locus">Ppro_0681</name>
</gene>
<protein>
    <recommendedName>
        <fullName evidence="1">Large ribosomal subunit protein uL4</fullName>
    </recommendedName>
    <alternativeName>
        <fullName evidence="3">50S ribosomal protein L4</fullName>
    </alternativeName>
</protein>
<name>RL4_PELPD</name>
<accession>A1ALU2</accession>